<dbReference type="EC" id="4.2.1.108" evidence="1"/>
<dbReference type="EMBL" id="CP000431">
    <property type="protein sequence ID" value="ABG93131.1"/>
    <property type="molecule type" value="Genomic_DNA"/>
</dbReference>
<dbReference type="RefSeq" id="WP_009474015.1">
    <property type="nucleotide sequence ID" value="NC_008268.1"/>
</dbReference>
<dbReference type="SMR" id="Q0SH55"/>
<dbReference type="DNASU" id="4219161"/>
<dbReference type="KEGG" id="rha:RHA1_ro01307"/>
<dbReference type="eggNOG" id="COG1917">
    <property type="taxonomic scope" value="Bacteria"/>
</dbReference>
<dbReference type="HOGENOM" id="CLU_154525_0_0_11"/>
<dbReference type="OrthoDB" id="4406415at2"/>
<dbReference type="UniPathway" id="UPA00067">
    <property type="reaction ID" value="UER00123"/>
</dbReference>
<dbReference type="Proteomes" id="UP000008710">
    <property type="component" value="Chromosome"/>
</dbReference>
<dbReference type="GO" id="GO:0033990">
    <property type="term" value="F:ectoine synthase activity"/>
    <property type="evidence" value="ECO:0007669"/>
    <property type="project" value="UniProtKB-EC"/>
</dbReference>
<dbReference type="GO" id="GO:0019491">
    <property type="term" value="P:ectoine biosynthetic process"/>
    <property type="evidence" value="ECO:0007669"/>
    <property type="project" value="UniProtKB-UniRule"/>
</dbReference>
<dbReference type="CDD" id="cd06978">
    <property type="entry name" value="cupin_EctC"/>
    <property type="match status" value="1"/>
</dbReference>
<dbReference type="Gene3D" id="2.60.120.10">
    <property type="entry name" value="Jelly Rolls"/>
    <property type="match status" value="1"/>
</dbReference>
<dbReference type="HAMAP" id="MF_01255">
    <property type="entry name" value="Ectoine_synth"/>
    <property type="match status" value="1"/>
</dbReference>
<dbReference type="InterPro" id="IPR010462">
    <property type="entry name" value="Ectoine_synth"/>
</dbReference>
<dbReference type="InterPro" id="IPR014710">
    <property type="entry name" value="RmlC-like_jellyroll"/>
</dbReference>
<dbReference type="InterPro" id="IPR011051">
    <property type="entry name" value="RmlC_Cupin_sf"/>
</dbReference>
<dbReference type="NCBIfam" id="NF009806">
    <property type="entry name" value="PRK13290.1"/>
    <property type="match status" value="1"/>
</dbReference>
<dbReference type="PANTHER" id="PTHR39289">
    <property type="match status" value="1"/>
</dbReference>
<dbReference type="PANTHER" id="PTHR39289:SF1">
    <property type="entry name" value="L-ECTOINE SYNTHASE"/>
    <property type="match status" value="1"/>
</dbReference>
<dbReference type="Pfam" id="PF06339">
    <property type="entry name" value="Ectoine_synth"/>
    <property type="match status" value="1"/>
</dbReference>
<dbReference type="SUPFAM" id="SSF51182">
    <property type="entry name" value="RmlC-like cupins"/>
    <property type="match status" value="1"/>
</dbReference>
<proteinExistence type="inferred from homology"/>
<feature type="chain" id="PRO_1000067236" description="L-ectoine synthase">
    <location>
        <begin position="1"/>
        <end position="132"/>
    </location>
</feature>
<sequence length="132" mass="14883">MIVRTTAEITDTDRDITSEDGNWRSKRIILGGDKVGFSFHETTIKAGSVNEFHYANHVEAVWLVEGTGKLIDLDNDKVYELGPGSMYLLNGHERHRVEPETEMRMLCVFNPPVTGREVHDENGVYPLVEVPA</sequence>
<protein>
    <recommendedName>
        <fullName evidence="1">L-ectoine synthase</fullName>
        <ecNumber evidence="1">4.2.1.108</ecNumber>
    </recommendedName>
    <alternativeName>
        <fullName evidence="1">N-acetyldiaminobutyrate dehydratase</fullName>
    </alternativeName>
</protein>
<organism>
    <name type="scientific">Rhodococcus jostii (strain RHA1)</name>
    <dbReference type="NCBI Taxonomy" id="101510"/>
    <lineage>
        <taxon>Bacteria</taxon>
        <taxon>Bacillati</taxon>
        <taxon>Actinomycetota</taxon>
        <taxon>Actinomycetes</taxon>
        <taxon>Mycobacteriales</taxon>
        <taxon>Nocardiaceae</taxon>
        <taxon>Rhodococcus</taxon>
    </lineage>
</organism>
<comment type="function">
    <text evidence="1">Catalyzes the circularization of gamma-N-acetyl-alpha,gamma-diaminobutyric acid (ADABA) to ectoine (1,4,5,6-tetrahydro-2-methyl-4-pyrimidine carboxylic acid), which is an excellent osmoprotectant.</text>
</comment>
<comment type="catalytic activity">
    <reaction evidence="1">
        <text>(2S)-4-acetamido-2-aminobutanoate = L-ectoine + H2O</text>
        <dbReference type="Rhea" id="RHEA:17281"/>
        <dbReference type="ChEBI" id="CHEBI:15377"/>
        <dbReference type="ChEBI" id="CHEBI:58515"/>
        <dbReference type="ChEBI" id="CHEBI:58929"/>
        <dbReference type="EC" id="4.2.1.108"/>
    </reaction>
</comment>
<comment type="pathway">
    <text evidence="1">Amine and polyamine biosynthesis; ectoine biosynthesis; L-ectoine from L-aspartate 4-semialdehyde: step 3/3.</text>
</comment>
<comment type="similarity">
    <text evidence="1">Belongs to the ectoine synthase family.</text>
</comment>
<reference key="1">
    <citation type="journal article" date="2006" name="Proc. Natl. Acad. Sci. U.S.A.">
        <title>The complete genome of Rhodococcus sp. RHA1 provides insights into a catabolic powerhouse.</title>
        <authorList>
            <person name="McLeod M.P."/>
            <person name="Warren R.L."/>
            <person name="Hsiao W.W.L."/>
            <person name="Araki N."/>
            <person name="Myhre M."/>
            <person name="Fernandes C."/>
            <person name="Miyazawa D."/>
            <person name="Wong W."/>
            <person name="Lillquist A.L."/>
            <person name="Wang D."/>
            <person name="Dosanjh M."/>
            <person name="Hara H."/>
            <person name="Petrescu A."/>
            <person name="Morin R.D."/>
            <person name="Yang G."/>
            <person name="Stott J.M."/>
            <person name="Schein J.E."/>
            <person name="Shin H."/>
            <person name="Smailus D."/>
            <person name="Siddiqui A.S."/>
            <person name="Marra M.A."/>
            <person name="Jones S.J.M."/>
            <person name="Holt R."/>
            <person name="Brinkman F.S.L."/>
            <person name="Miyauchi K."/>
            <person name="Fukuda M."/>
            <person name="Davies J.E."/>
            <person name="Mohn W.W."/>
            <person name="Eltis L.D."/>
        </authorList>
    </citation>
    <scope>NUCLEOTIDE SEQUENCE [LARGE SCALE GENOMIC DNA]</scope>
    <source>
        <strain>RHA1</strain>
    </source>
</reference>
<name>ECTC_RHOJR</name>
<keyword id="KW-0456">Lyase</keyword>
<gene>
    <name evidence="1" type="primary">ectC</name>
    <name type="ordered locus">RHA1_ro01307</name>
</gene>
<accession>Q0SH55</accession>
<evidence type="ECO:0000255" key="1">
    <source>
        <dbReference type="HAMAP-Rule" id="MF_01255"/>
    </source>
</evidence>